<reference key="1">
    <citation type="journal article" date="2007" name="BMC Microbiol.">
        <title>Subtle genetic changes enhance virulence of methicillin resistant and sensitive Staphylococcus aureus.</title>
        <authorList>
            <person name="Highlander S.K."/>
            <person name="Hulten K.G."/>
            <person name="Qin X."/>
            <person name="Jiang H."/>
            <person name="Yerrapragada S."/>
            <person name="Mason E.O. Jr."/>
            <person name="Shang Y."/>
            <person name="Williams T.M."/>
            <person name="Fortunov R.M."/>
            <person name="Liu Y."/>
            <person name="Igboeli O."/>
            <person name="Petrosino J."/>
            <person name="Tirumalai M."/>
            <person name="Uzman A."/>
            <person name="Fox G.E."/>
            <person name="Cardenas A.M."/>
            <person name="Muzny D.M."/>
            <person name="Hemphill L."/>
            <person name="Ding Y."/>
            <person name="Dugan S."/>
            <person name="Blyth P.R."/>
            <person name="Buhay C.J."/>
            <person name="Dinh H.H."/>
            <person name="Hawes A.C."/>
            <person name="Holder M."/>
            <person name="Kovar C.L."/>
            <person name="Lee S.L."/>
            <person name="Liu W."/>
            <person name="Nazareth L.V."/>
            <person name="Wang Q."/>
            <person name="Zhou J."/>
            <person name="Kaplan S.L."/>
            <person name="Weinstock G.M."/>
        </authorList>
    </citation>
    <scope>NUCLEOTIDE SEQUENCE [LARGE SCALE GENOMIC DNA]</scope>
    <source>
        <strain>USA300 / TCH1516</strain>
    </source>
</reference>
<organism>
    <name type="scientific">Staphylococcus aureus (strain USA300 / TCH1516)</name>
    <dbReference type="NCBI Taxonomy" id="451516"/>
    <lineage>
        <taxon>Bacteria</taxon>
        <taxon>Bacillati</taxon>
        <taxon>Bacillota</taxon>
        <taxon>Bacilli</taxon>
        <taxon>Bacillales</taxon>
        <taxon>Staphylococcaceae</taxon>
        <taxon>Staphylococcus</taxon>
    </lineage>
</organism>
<accession>A8Z581</accession>
<evidence type="ECO:0000250" key="1"/>
<evidence type="ECO:0000255" key="2"/>
<evidence type="ECO:0000255" key="3">
    <source>
        <dbReference type="PROSITE-ProRule" id="PRU00107"/>
    </source>
</evidence>
<evidence type="ECO:0000305" key="4"/>
<name>NREB_STAAT</name>
<proteinExistence type="inferred from homology"/>
<keyword id="KW-0004">4Fe-4S</keyword>
<keyword id="KW-0067">ATP-binding</keyword>
<keyword id="KW-0963">Cytoplasm</keyword>
<keyword id="KW-0408">Iron</keyword>
<keyword id="KW-0411">Iron-sulfur</keyword>
<keyword id="KW-0418">Kinase</keyword>
<keyword id="KW-0479">Metal-binding</keyword>
<keyword id="KW-0547">Nucleotide-binding</keyword>
<keyword id="KW-0597">Phosphoprotein</keyword>
<keyword id="KW-0808">Transferase</keyword>
<keyword id="KW-0902">Two-component regulatory system</keyword>
<gene>
    <name type="primary">nreB</name>
    <name type="ordered locus">USA300HOU_2374</name>
</gene>
<dbReference type="EC" id="2.7.13.3"/>
<dbReference type="EMBL" id="CP000730">
    <property type="protein sequence ID" value="ABX30364.1"/>
    <property type="molecule type" value="Genomic_DNA"/>
</dbReference>
<dbReference type="RefSeq" id="WP_000606546.1">
    <property type="nucleotide sequence ID" value="NC_010079.1"/>
</dbReference>
<dbReference type="SMR" id="A8Z581"/>
<dbReference type="KEGG" id="sax:USA300HOU_2374"/>
<dbReference type="HOGENOM" id="CLU_000445_114_0_9"/>
<dbReference type="GO" id="GO:0005737">
    <property type="term" value="C:cytoplasm"/>
    <property type="evidence" value="ECO:0007669"/>
    <property type="project" value="UniProtKB-SubCell"/>
</dbReference>
<dbReference type="GO" id="GO:0016020">
    <property type="term" value="C:membrane"/>
    <property type="evidence" value="ECO:0007669"/>
    <property type="project" value="InterPro"/>
</dbReference>
<dbReference type="GO" id="GO:0051539">
    <property type="term" value="F:4 iron, 4 sulfur cluster binding"/>
    <property type="evidence" value="ECO:0007669"/>
    <property type="project" value="UniProtKB-KW"/>
</dbReference>
<dbReference type="GO" id="GO:0005524">
    <property type="term" value="F:ATP binding"/>
    <property type="evidence" value="ECO:0007669"/>
    <property type="project" value="UniProtKB-KW"/>
</dbReference>
<dbReference type="GO" id="GO:0005506">
    <property type="term" value="F:iron ion binding"/>
    <property type="evidence" value="ECO:0007669"/>
    <property type="project" value="InterPro"/>
</dbReference>
<dbReference type="GO" id="GO:0000155">
    <property type="term" value="F:phosphorelay sensor kinase activity"/>
    <property type="evidence" value="ECO:0007669"/>
    <property type="project" value="InterPro"/>
</dbReference>
<dbReference type="GO" id="GO:0046983">
    <property type="term" value="F:protein dimerization activity"/>
    <property type="evidence" value="ECO:0007669"/>
    <property type="project" value="InterPro"/>
</dbReference>
<dbReference type="CDD" id="cd16917">
    <property type="entry name" value="HATPase_UhpB-NarQ-NarX-like"/>
    <property type="match status" value="1"/>
</dbReference>
<dbReference type="Gene3D" id="1.20.5.1930">
    <property type="match status" value="1"/>
</dbReference>
<dbReference type="Gene3D" id="3.30.565.10">
    <property type="entry name" value="Histidine kinase-like ATPase, C-terminal domain"/>
    <property type="match status" value="1"/>
</dbReference>
<dbReference type="InterPro" id="IPR036890">
    <property type="entry name" value="HATPase_C_sf"/>
</dbReference>
<dbReference type="InterPro" id="IPR005467">
    <property type="entry name" value="His_kinase_dom"/>
</dbReference>
<dbReference type="InterPro" id="IPR050482">
    <property type="entry name" value="Sensor_HK_TwoCompSys"/>
</dbReference>
<dbReference type="InterPro" id="IPR004358">
    <property type="entry name" value="Sig_transdc_His_kin-like_C"/>
</dbReference>
<dbReference type="InterPro" id="IPR011712">
    <property type="entry name" value="Sig_transdc_His_kin_sub3_dim/P"/>
</dbReference>
<dbReference type="InterPro" id="IPR017203">
    <property type="entry name" value="Sig_transdc_His_kinase_NreB"/>
</dbReference>
<dbReference type="PANTHER" id="PTHR24421">
    <property type="entry name" value="NITRATE/NITRITE SENSOR PROTEIN NARX-RELATED"/>
    <property type="match status" value="1"/>
</dbReference>
<dbReference type="PANTHER" id="PTHR24421:SF10">
    <property type="entry name" value="NITRATE_NITRITE SENSOR PROTEIN NARQ"/>
    <property type="match status" value="1"/>
</dbReference>
<dbReference type="Pfam" id="PF02518">
    <property type="entry name" value="HATPase_c"/>
    <property type="match status" value="1"/>
</dbReference>
<dbReference type="Pfam" id="PF07730">
    <property type="entry name" value="HisKA_3"/>
    <property type="match status" value="1"/>
</dbReference>
<dbReference type="PIRSF" id="PIRSF037432">
    <property type="entry name" value="STHK_NreB"/>
    <property type="match status" value="1"/>
</dbReference>
<dbReference type="PRINTS" id="PR00344">
    <property type="entry name" value="BCTRLSENSOR"/>
</dbReference>
<dbReference type="SMART" id="SM00387">
    <property type="entry name" value="HATPase_c"/>
    <property type="match status" value="1"/>
</dbReference>
<dbReference type="SUPFAM" id="SSF55874">
    <property type="entry name" value="ATPase domain of HSP90 chaperone/DNA topoisomerase II/histidine kinase"/>
    <property type="match status" value="1"/>
</dbReference>
<dbReference type="PROSITE" id="PS50109">
    <property type="entry name" value="HIS_KIN"/>
    <property type="match status" value="1"/>
</dbReference>
<sequence>MINEDSIQLDTLLKKYYEHSIEKIVFADDNGKIIAMNDAAKDILSEEDNYSAVANAICHRCEGYTNAYDVQSCKDCFLESMQVQATNFQVFMKTKDQKVMPFTATYQLIDQDRGIHAFTLQNVSSQIEQQEKLHQQRMMRKTISAQENERKRISRELHDSVIQEMLNVDVQLRLLKYQEDTTKLLEDAENIEYIVAKLIDDIRNMSVELRPASLDDLGLEAAFKSYFKQFEENYGIKIIYTSNIKNTRFDSDIETVVYRVVQEAILNALKYADVNEINVGIRQTGRHLVAEVIDAGNGFDPSSKPKGSGLGLYGMNERAELVSGSVNIETKIGEGTNVTLNIPI</sequence>
<feature type="chain" id="PRO_0000349336" description="Oxygen sensor histidine kinase NreB">
    <location>
        <begin position="1"/>
        <end position="344"/>
    </location>
</feature>
<feature type="domain" description="Histidine kinase" evidence="3">
    <location>
        <begin position="152"/>
        <end position="344"/>
    </location>
</feature>
<feature type="binding site" evidence="2">
    <location>
        <position position="58"/>
    </location>
    <ligand>
        <name>[4Fe-4S] cluster</name>
        <dbReference type="ChEBI" id="CHEBI:49883"/>
    </ligand>
</feature>
<feature type="binding site" evidence="2">
    <location>
        <position position="61"/>
    </location>
    <ligand>
        <name>[4Fe-4S] cluster</name>
        <dbReference type="ChEBI" id="CHEBI:49883"/>
    </ligand>
</feature>
<feature type="binding site" evidence="2">
    <location>
        <position position="73"/>
    </location>
    <ligand>
        <name>[4Fe-4S] cluster</name>
        <dbReference type="ChEBI" id="CHEBI:49883"/>
    </ligand>
</feature>
<feature type="binding site" evidence="2">
    <location>
        <position position="76"/>
    </location>
    <ligand>
        <name>[4Fe-4S] cluster</name>
        <dbReference type="ChEBI" id="CHEBI:49883"/>
    </ligand>
</feature>
<feature type="modified residue" description="Phosphohistidine; by autocatalysis" evidence="3">
    <location>
        <position position="158"/>
    </location>
</feature>
<comment type="function">
    <text evidence="1">Member of the two-component regulatory system NreB/NreC involved in the control of dissimilatory nitrate/nitrite reduction in response to oxygen. NreB functions as a direct oxygen sensor histidine kinase which is autophosphorylated, in the absence of oxygen, probably at the conserved histidine residue, and transfers its phosphate group probably to a conserved aspartate residue of NreC. NreB/NreC activates the expression of the nitrate (narGHJI) and nitrite (nir) reductase operons, as well as the putative nitrate transporter gene narT (By similarity).</text>
</comment>
<comment type="catalytic activity">
    <reaction>
        <text>ATP + protein L-histidine = ADP + protein N-phospho-L-histidine.</text>
        <dbReference type="EC" id="2.7.13.3"/>
    </reaction>
</comment>
<comment type="cofactor">
    <cofactor evidence="4">
        <name>[4Fe-4S] cluster</name>
        <dbReference type="ChEBI" id="CHEBI:49883"/>
    </cofactor>
    <text evidence="4">Binds 1 [4Fe-4S] cluster.</text>
</comment>
<comment type="subcellular location">
    <subcellularLocation>
        <location evidence="4">Cytoplasm</location>
    </subcellularLocation>
</comment>
<comment type="PTM">
    <text evidence="1">Autophosphorylated.</text>
</comment>
<protein>
    <recommendedName>
        <fullName>Oxygen sensor histidine kinase NreB</fullName>
        <ecNumber>2.7.13.3</ecNumber>
    </recommendedName>
    <alternativeName>
        <fullName>Nitrogen regulation protein B</fullName>
    </alternativeName>
</protein>